<organism>
    <name type="scientific">Mus musculus</name>
    <name type="common">Mouse</name>
    <dbReference type="NCBI Taxonomy" id="10090"/>
    <lineage>
        <taxon>Eukaryota</taxon>
        <taxon>Metazoa</taxon>
        <taxon>Chordata</taxon>
        <taxon>Craniata</taxon>
        <taxon>Vertebrata</taxon>
        <taxon>Euteleostomi</taxon>
        <taxon>Mammalia</taxon>
        <taxon>Eutheria</taxon>
        <taxon>Euarchontoglires</taxon>
        <taxon>Glires</taxon>
        <taxon>Rodentia</taxon>
        <taxon>Myomorpha</taxon>
        <taxon>Muroidea</taxon>
        <taxon>Muridae</taxon>
        <taxon>Murinae</taxon>
        <taxon>Mus</taxon>
        <taxon>Mus</taxon>
    </lineage>
</organism>
<reference key="1">
    <citation type="journal article" date="2009" name="PLoS Biol.">
        <title>Lineage-specific biology revealed by a finished genome assembly of the mouse.</title>
        <authorList>
            <person name="Church D.M."/>
            <person name="Goodstadt L."/>
            <person name="Hillier L.W."/>
            <person name="Zody M.C."/>
            <person name="Goldstein S."/>
            <person name="She X."/>
            <person name="Bult C.J."/>
            <person name="Agarwala R."/>
            <person name="Cherry J.L."/>
            <person name="DiCuccio M."/>
            <person name="Hlavina W."/>
            <person name="Kapustin Y."/>
            <person name="Meric P."/>
            <person name="Maglott D."/>
            <person name="Birtle Z."/>
            <person name="Marques A.C."/>
            <person name="Graves T."/>
            <person name="Zhou S."/>
            <person name="Teague B."/>
            <person name="Potamousis K."/>
            <person name="Churas C."/>
            <person name="Place M."/>
            <person name="Herschleb J."/>
            <person name="Runnheim R."/>
            <person name="Forrest D."/>
            <person name="Amos-Landgraf J."/>
            <person name="Schwartz D.C."/>
            <person name="Cheng Z."/>
            <person name="Lindblad-Toh K."/>
            <person name="Eichler E.E."/>
            <person name="Ponting C.P."/>
        </authorList>
    </citation>
    <scope>NUCLEOTIDE SEQUENCE [LARGE SCALE GENOMIC DNA]</scope>
    <source>
        <strain>C57BL/6J</strain>
    </source>
</reference>
<reference evidence="4" key="2">
    <citation type="journal article" date="2004" name="Genome Res.">
        <title>The status, quality, and expansion of the NIH full-length cDNA project: the Mammalian Gene Collection (MGC).</title>
        <authorList>
            <consortium name="The MGC Project Team"/>
        </authorList>
    </citation>
    <scope>NUCLEOTIDE SEQUENCE [LARGE SCALE MRNA]</scope>
</reference>
<reference evidence="3 5" key="3">
    <citation type="journal article" date="2003" name="Mol. Biol. Evol.">
        <title>Adaptive diversification of bitter taste receptor genes in mammalian evolution.</title>
        <authorList>
            <person name="Shi P."/>
            <person name="Zhang J."/>
            <person name="Yang H."/>
            <person name="Zhang Y.-P."/>
        </authorList>
    </citation>
    <scope>IDENTIFICATION</scope>
</reference>
<dbReference type="EMBL" id="AC124523">
    <property type="status" value="NOT_ANNOTATED_CDS"/>
    <property type="molecule type" value="Genomic_DNA"/>
</dbReference>
<dbReference type="EMBL" id="BC104410">
    <property type="protein sequence ID" value="AAI04411.1"/>
    <property type="molecule type" value="mRNA"/>
</dbReference>
<dbReference type="EMBL" id="BC104411">
    <property type="protein sequence ID" value="AAI04412.1"/>
    <property type="molecule type" value="mRNA"/>
</dbReference>
<dbReference type="EMBL" id="BK001077">
    <property type="protein sequence ID" value="DAA01216.1"/>
    <property type="molecule type" value="Genomic_DNA"/>
</dbReference>
<dbReference type="CCDS" id="CCDS20618.1"/>
<dbReference type="RefSeq" id="NP_996907.1">
    <property type="nucleotide sequence ID" value="NM_207024.1"/>
</dbReference>
<dbReference type="SMR" id="Q7M720"/>
<dbReference type="FunCoup" id="Q7M720">
    <property type="interactions" value="134"/>
</dbReference>
<dbReference type="STRING" id="10090.ENSMUSP00000093044"/>
<dbReference type="GlyCosmos" id="Q7M720">
    <property type="glycosylation" value="1 site, No reported glycans"/>
</dbReference>
<dbReference type="GlyGen" id="Q7M720">
    <property type="glycosylation" value="1 site"/>
</dbReference>
<dbReference type="PhosphoSitePlus" id="Q7M720"/>
<dbReference type="PaxDb" id="10090-ENSMUSP00000093044"/>
<dbReference type="DNASU" id="387349"/>
<dbReference type="Ensembl" id="ENSMUST00000095395.2">
    <property type="protein sequence ID" value="ENSMUSP00000093044.2"/>
    <property type="gene ID" value="ENSMUSG00000071150.2"/>
</dbReference>
<dbReference type="GeneID" id="387349"/>
<dbReference type="KEGG" id="mmu:387349"/>
<dbReference type="UCSC" id="uc009ejj.1">
    <property type="organism name" value="mouse"/>
</dbReference>
<dbReference type="AGR" id="MGI:2681259"/>
<dbReference type="CTD" id="387349"/>
<dbReference type="MGI" id="MGI:2681259">
    <property type="gene designation" value="Tas2r121"/>
</dbReference>
<dbReference type="VEuPathDB" id="HostDB:ENSMUSG00000071150"/>
<dbReference type="eggNOG" id="ENOG502TE6X">
    <property type="taxonomic scope" value="Eukaryota"/>
</dbReference>
<dbReference type="GeneTree" id="ENSGT01100000263477"/>
<dbReference type="HOGENOM" id="CLU_072337_2_0_1"/>
<dbReference type="InParanoid" id="Q7M720"/>
<dbReference type="OMA" id="KMQLNYK"/>
<dbReference type="OrthoDB" id="8876749at2759"/>
<dbReference type="PhylomeDB" id="Q7M720"/>
<dbReference type="TreeFam" id="TF335891"/>
<dbReference type="Reactome" id="R-MMU-418594">
    <property type="pathway name" value="G alpha (i) signalling events"/>
</dbReference>
<dbReference type="Reactome" id="R-MMU-420499">
    <property type="pathway name" value="Class C/3 (Metabotropic glutamate/pheromone receptors)"/>
</dbReference>
<dbReference type="Reactome" id="R-MMU-9717207">
    <property type="pathway name" value="Sensory perception of sweet, bitter, and umami (glutamate) taste"/>
</dbReference>
<dbReference type="BioGRID-ORCS" id="387349">
    <property type="hits" value="1 hit in 79 CRISPR screens"/>
</dbReference>
<dbReference type="PRO" id="PR:Q7M720"/>
<dbReference type="Proteomes" id="UP000000589">
    <property type="component" value="Chromosome 6"/>
</dbReference>
<dbReference type="RNAct" id="Q7M720">
    <property type="molecule type" value="protein"/>
</dbReference>
<dbReference type="GO" id="GO:0005886">
    <property type="term" value="C:plasma membrane"/>
    <property type="evidence" value="ECO:0007669"/>
    <property type="project" value="UniProtKB-SubCell"/>
</dbReference>
<dbReference type="GO" id="GO:0033038">
    <property type="term" value="F:bitter taste receptor activity"/>
    <property type="evidence" value="ECO:0007669"/>
    <property type="project" value="InterPro"/>
</dbReference>
<dbReference type="GO" id="GO:0004930">
    <property type="term" value="F:G protein-coupled receptor activity"/>
    <property type="evidence" value="ECO:0007669"/>
    <property type="project" value="UniProtKB-KW"/>
</dbReference>
<dbReference type="CDD" id="cd15026">
    <property type="entry name" value="7tm_TAS2R13"/>
    <property type="match status" value="1"/>
</dbReference>
<dbReference type="FunFam" id="1.20.1070.10:FF:000042">
    <property type="entry name" value="Taste receptor type 2 member 7"/>
    <property type="match status" value="1"/>
</dbReference>
<dbReference type="Gene3D" id="1.20.1070.10">
    <property type="entry name" value="Rhodopsin 7-helix transmembrane proteins"/>
    <property type="match status" value="1"/>
</dbReference>
<dbReference type="InterPro" id="IPR017452">
    <property type="entry name" value="GPCR_Rhodpsn_7TM"/>
</dbReference>
<dbReference type="InterPro" id="IPR007960">
    <property type="entry name" value="TAS2R"/>
</dbReference>
<dbReference type="PANTHER" id="PTHR11394">
    <property type="entry name" value="TASTE RECEPTOR TYPE 2"/>
    <property type="match status" value="1"/>
</dbReference>
<dbReference type="PANTHER" id="PTHR11394:SF28">
    <property type="entry name" value="TASTE RECEPTOR TYPE 2 MEMBER 13"/>
    <property type="match status" value="1"/>
</dbReference>
<dbReference type="Pfam" id="PF05296">
    <property type="entry name" value="TAS2R"/>
    <property type="match status" value="1"/>
</dbReference>
<dbReference type="SUPFAM" id="SSF81321">
    <property type="entry name" value="Family A G protein-coupled receptor-like"/>
    <property type="match status" value="1"/>
</dbReference>
<dbReference type="PROSITE" id="PS50262">
    <property type="entry name" value="G_PROTEIN_RECEP_F1_2"/>
    <property type="match status" value="1"/>
</dbReference>
<keyword id="KW-1003">Cell membrane</keyword>
<keyword id="KW-0297">G-protein coupled receptor</keyword>
<keyword id="KW-0325">Glycoprotein</keyword>
<keyword id="KW-0472">Membrane</keyword>
<keyword id="KW-0675">Receptor</keyword>
<keyword id="KW-1185">Reference proteome</keyword>
<keyword id="KW-0716">Sensory transduction</keyword>
<keyword id="KW-0919">Taste</keyword>
<keyword id="KW-0807">Transducer</keyword>
<keyword id="KW-0812">Transmembrane</keyword>
<keyword id="KW-1133">Transmembrane helix</keyword>
<protein>
    <recommendedName>
        <fullName>Taste receptor type 2 member 13</fullName>
        <shortName>T2R13</shortName>
    </recommendedName>
    <alternativeName>
        <fullName>Taste receptor type 2 member 121</fullName>
        <shortName>T2R121</shortName>
        <shortName>mT2R48</shortName>
    </alternativeName>
</protein>
<proteinExistence type="evidence at transcript level"/>
<evidence type="ECO:0000250" key="1">
    <source>
        <dbReference type="UniProtKB" id="Q9NYV9"/>
    </source>
</evidence>
<evidence type="ECO:0000255" key="2"/>
<evidence type="ECO:0000305" key="3"/>
<evidence type="ECO:0000312" key="4">
    <source>
        <dbReference type="EMBL" id="AAI04411.1"/>
    </source>
</evidence>
<evidence type="ECO:0000312" key="5">
    <source>
        <dbReference type="EMBL" id="DAA01216.1"/>
    </source>
</evidence>
<evidence type="ECO:0000312" key="6">
    <source>
        <dbReference type="MGI" id="MGI:2681259"/>
    </source>
</evidence>
<gene>
    <name evidence="1" type="primary">Tas2r13</name>
    <name evidence="6" type="synonym">Tas2r121</name>
</gene>
<feature type="chain" id="PRO_0000082252" description="Taste receptor type 2 member 13">
    <location>
        <begin position="1"/>
        <end position="305"/>
    </location>
</feature>
<feature type="topological domain" description="Extracellular" evidence="2">
    <location>
        <begin position="1"/>
        <end position="7"/>
    </location>
</feature>
<feature type="transmembrane region" description="Helical; Name=1" evidence="2">
    <location>
        <begin position="8"/>
        <end position="28"/>
    </location>
</feature>
<feature type="topological domain" description="Cytoplasmic" evidence="2">
    <location>
        <begin position="29"/>
        <end position="43"/>
    </location>
</feature>
<feature type="transmembrane region" description="Helical; Name=2" evidence="2">
    <location>
        <begin position="44"/>
        <end position="64"/>
    </location>
</feature>
<feature type="topological domain" description="Extracellular" evidence="2">
    <location>
        <begin position="65"/>
        <end position="88"/>
    </location>
</feature>
<feature type="transmembrane region" description="Helical; Name=3" evidence="2">
    <location>
        <begin position="89"/>
        <end position="109"/>
    </location>
</feature>
<feature type="topological domain" description="Cytoplasmic" evidence="2">
    <location>
        <begin position="110"/>
        <end position="128"/>
    </location>
</feature>
<feature type="transmembrane region" description="Helical; Name=4" evidence="2">
    <location>
        <begin position="129"/>
        <end position="149"/>
    </location>
</feature>
<feature type="topological domain" description="Extracellular" evidence="2">
    <location>
        <begin position="150"/>
        <end position="182"/>
    </location>
</feature>
<feature type="transmembrane region" description="Helical; Name=5" evidence="2">
    <location>
        <begin position="183"/>
        <end position="203"/>
    </location>
</feature>
<feature type="topological domain" description="Cytoplasmic" evidence="2">
    <location>
        <begin position="204"/>
        <end position="232"/>
    </location>
</feature>
<feature type="transmembrane region" description="Helical; Name=6" evidence="2">
    <location>
        <begin position="233"/>
        <end position="253"/>
    </location>
</feature>
<feature type="topological domain" description="Extracellular" evidence="2">
    <location>
        <begin position="254"/>
        <end position="262"/>
    </location>
</feature>
<feature type="transmembrane region" description="Helical; Name=7" evidence="2">
    <location>
        <begin position="263"/>
        <end position="283"/>
    </location>
</feature>
<feature type="topological domain" description="Cytoplasmic" evidence="2">
    <location>
        <begin position="284"/>
        <end position="305"/>
    </location>
</feature>
<feature type="glycosylation site" description="N-linked (GlcNAc...) asparagine" evidence="2">
    <location>
        <position position="162"/>
    </location>
</feature>
<sequence length="305" mass="35521">MGSNVYGILTMVMIAEFVFGNMSNGFIVLINCIDWVRKGTLSSIGWILLFLAISRMVLIWEMLITWIKYMKYSFSFVTGTELRGIMFTWVISNHFSLWLATILSIFYLLKIASFSKPVFLYLKWREKKVLLIVLLGNLIFLMLNILQINKHIEHWMYQYERNITWSSRVSDFAGFSNLVLLEMIVFSVTPFTVALVSFILLIFSLWKHLQKMHLNSRGERDPSTKAHVNALRIMVSFLLLYATYFISFFLSLIPMAHKTRLGLMFSITVGLFYPSSHSFILILGHSNLRQASLWVMTYLKCGQKH</sequence>
<accession>Q7M720</accession>
<name>T2R13_MOUSE</name>
<comment type="function">
    <text evidence="1">Receptor that may play a role in the perception of bitterness and is gustducin-linked. May play a role in sensing the chemical composition of the gastrointestinal content. The activity of this receptor may stimulate alpha gustducin, mediate PLC-beta-2 activation and lead to the gating of TRPM5 (By similarity).</text>
</comment>
<comment type="subcellular location">
    <subcellularLocation>
        <location>Cell membrane</location>
        <topology>Multi-pass membrane protein</topology>
    </subcellularLocation>
</comment>
<comment type="miscellaneous">
    <text evidence="3">Most taste cells may be activated by a limited number of bitter compounds; individual taste cells can discriminate among bitter stimuli.</text>
</comment>
<comment type="similarity">
    <text evidence="2">Belongs to the G-protein coupled receptor T2R family.</text>
</comment>